<gene>
    <name evidence="1" type="primary">mukB</name>
    <name type="ordered locus">SG1003</name>
</gene>
<reference key="1">
    <citation type="journal article" date="2006" name="Genome Res.">
        <title>Massive genome erosion and functional adaptations provide insights into the symbiotic lifestyle of Sodalis glossinidius in the tsetse host.</title>
        <authorList>
            <person name="Toh H."/>
            <person name="Weiss B.L."/>
            <person name="Perkin S.A.H."/>
            <person name="Yamashita A."/>
            <person name="Oshima K."/>
            <person name="Hattori M."/>
            <person name="Aksoy S."/>
        </authorList>
    </citation>
    <scope>NUCLEOTIDE SEQUENCE [LARGE SCALE GENOMIC DNA]</scope>
    <source>
        <strain>morsitans</strain>
    </source>
</reference>
<accession>Q2NU97</accession>
<name>MUKB_SODGM</name>
<keyword id="KW-0067">ATP-binding</keyword>
<keyword id="KW-0131">Cell cycle</keyword>
<keyword id="KW-0132">Cell division</keyword>
<keyword id="KW-0159">Chromosome partition</keyword>
<keyword id="KW-0175">Coiled coil</keyword>
<keyword id="KW-0963">Cytoplasm</keyword>
<keyword id="KW-0226">DNA condensation</keyword>
<keyword id="KW-0238">DNA-binding</keyword>
<keyword id="KW-0547">Nucleotide-binding</keyword>
<evidence type="ECO:0000255" key="1">
    <source>
        <dbReference type="HAMAP-Rule" id="MF_01800"/>
    </source>
</evidence>
<comment type="function">
    <text evidence="1">Plays a central role in chromosome condensation, segregation and cell cycle progression. Functions as a homodimer, which is essential for chromosome partition. Involved in negative DNA supercoiling in vivo, and by this means organize and compact chromosomes. May achieve or facilitate chromosome segregation by condensation DNA from both sides of a centrally located replisome during cell division.</text>
</comment>
<comment type="subunit">
    <text evidence="1">Homodimerization via its hinge domain. Binds to DNA via its C-terminal region. Interacts, and probably forms a ternary complex, with MukE and MukF via its C-terminal region. The complex formation is stimulated by calcium or magnesium. Interacts with tubulin-related protein FtsZ.</text>
</comment>
<comment type="subcellular location">
    <subcellularLocation>
        <location evidence="1">Cytoplasm</location>
        <location evidence="1">Nucleoid</location>
    </subcellularLocation>
    <text evidence="1">Restricted to the nucleoid region.</text>
</comment>
<comment type="domain">
    <text evidence="1">The hinge domain, which separates the large intramolecular coiled coil regions, allows the homodimerization, forming a V-shaped homodimer.</text>
</comment>
<comment type="similarity">
    <text evidence="1">Belongs to the SMC family. MukB subfamily.</text>
</comment>
<dbReference type="EMBL" id="AP008232">
    <property type="protein sequence ID" value="BAE74278.1"/>
    <property type="molecule type" value="Genomic_DNA"/>
</dbReference>
<dbReference type="RefSeq" id="WP_011410864.1">
    <property type="nucleotide sequence ID" value="NC_007712.1"/>
</dbReference>
<dbReference type="SMR" id="Q2NU97"/>
<dbReference type="STRING" id="343509.SG1003"/>
<dbReference type="KEGG" id="sgl:SG1003"/>
<dbReference type="eggNOG" id="COG3096">
    <property type="taxonomic scope" value="Bacteria"/>
</dbReference>
<dbReference type="HOGENOM" id="CLU_004430_0_0_6"/>
<dbReference type="OrthoDB" id="6722439at2"/>
<dbReference type="BioCyc" id="SGLO343509:SGP1_RS08565-MONOMER"/>
<dbReference type="Proteomes" id="UP000001932">
    <property type="component" value="Chromosome"/>
</dbReference>
<dbReference type="GO" id="GO:0005737">
    <property type="term" value="C:cytoplasm"/>
    <property type="evidence" value="ECO:0007669"/>
    <property type="project" value="UniProtKB-UniRule"/>
</dbReference>
<dbReference type="GO" id="GO:0009295">
    <property type="term" value="C:nucleoid"/>
    <property type="evidence" value="ECO:0007669"/>
    <property type="project" value="UniProtKB-SubCell"/>
</dbReference>
<dbReference type="GO" id="GO:0005524">
    <property type="term" value="F:ATP binding"/>
    <property type="evidence" value="ECO:0007669"/>
    <property type="project" value="UniProtKB-UniRule"/>
</dbReference>
<dbReference type="GO" id="GO:0003677">
    <property type="term" value="F:DNA binding"/>
    <property type="evidence" value="ECO:0007669"/>
    <property type="project" value="UniProtKB-UniRule"/>
</dbReference>
<dbReference type="GO" id="GO:0051301">
    <property type="term" value="P:cell division"/>
    <property type="evidence" value="ECO:0007669"/>
    <property type="project" value="UniProtKB-KW"/>
</dbReference>
<dbReference type="GO" id="GO:0030261">
    <property type="term" value="P:chromosome condensation"/>
    <property type="evidence" value="ECO:0007669"/>
    <property type="project" value="UniProtKB-KW"/>
</dbReference>
<dbReference type="GO" id="GO:0007059">
    <property type="term" value="P:chromosome segregation"/>
    <property type="evidence" value="ECO:0007669"/>
    <property type="project" value="UniProtKB-UniRule"/>
</dbReference>
<dbReference type="GO" id="GO:0006260">
    <property type="term" value="P:DNA replication"/>
    <property type="evidence" value="ECO:0007669"/>
    <property type="project" value="UniProtKB-UniRule"/>
</dbReference>
<dbReference type="FunFam" id="3.40.1140.10:FF:000002">
    <property type="entry name" value="Chromosome partition protein MukB"/>
    <property type="match status" value="1"/>
</dbReference>
<dbReference type="Gene3D" id="1.20.58.850">
    <property type="match status" value="1"/>
</dbReference>
<dbReference type="Gene3D" id="3.40.1140.10">
    <property type="match status" value="2"/>
</dbReference>
<dbReference type="Gene3D" id="1.20.5.420">
    <property type="entry name" value="Immunoglobulin FC, subunit C"/>
    <property type="match status" value="1"/>
</dbReference>
<dbReference type="Gene3D" id="3.30.70.3500">
    <property type="entry name" value="MukB, hinge domain"/>
    <property type="match status" value="1"/>
</dbReference>
<dbReference type="HAMAP" id="MF_01800">
    <property type="entry name" value="MukB"/>
    <property type="match status" value="1"/>
</dbReference>
<dbReference type="InterPro" id="IPR012090">
    <property type="entry name" value="MukB"/>
</dbReference>
<dbReference type="InterPro" id="IPR050308">
    <property type="entry name" value="MukB/SMC"/>
</dbReference>
<dbReference type="InterPro" id="IPR032520">
    <property type="entry name" value="MukB_hinge"/>
</dbReference>
<dbReference type="InterPro" id="IPR042501">
    <property type="entry name" value="MukB_hinge_sf"/>
</dbReference>
<dbReference type="InterPro" id="IPR007406">
    <property type="entry name" value="MukB_N_dom"/>
</dbReference>
<dbReference type="InterPro" id="IPR027417">
    <property type="entry name" value="P-loop_NTPase"/>
</dbReference>
<dbReference type="NCBIfam" id="NF003422">
    <property type="entry name" value="PRK04863.1"/>
    <property type="match status" value="1"/>
</dbReference>
<dbReference type="PANTHER" id="PTHR42963">
    <property type="entry name" value="CHROMOSOME PARTITION PROTEIN MUKB"/>
    <property type="match status" value="1"/>
</dbReference>
<dbReference type="PANTHER" id="PTHR42963:SF1">
    <property type="entry name" value="DUF4476 DOMAIN-CONTAINING PROTEIN"/>
    <property type="match status" value="1"/>
</dbReference>
<dbReference type="Pfam" id="PF04310">
    <property type="entry name" value="MukB"/>
    <property type="match status" value="1"/>
</dbReference>
<dbReference type="Pfam" id="PF16330">
    <property type="entry name" value="MukB_hinge"/>
    <property type="match status" value="1"/>
</dbReference>
<dbReference type="Pfam" id="PF13558">
    <property type="entry name" value="SbcC_Walker_B"/>
    <property type="match status" value="1"/>
</dbReference>
<dbReference type="PIRSF" id="PIRSF005246">
    <property type="entry name" value="MukB"/>
    <property type="match status" value="1"/>
</dbReference>
<dbReference type="SUPFAM" id="SSF52540">
    <property type="entry name" value="P-loop containing nucleoside triphosphate hydrolases"/>
    <property type="match status" value="2"/>
</dbReference>
<proteinExistence type="inferred from homology"/>
<sequence length="1484" mass="169134">MIERGKFRSLTLVNWNGFFARTFDLDALVTTLSGGNGAGKSTTMAAFITALIPDLTLLHFRNTTEAGATSGSRDKGLHGKLRAGVCYSALEVVNSRHQRVLVGVRLQQIAGRDRKVDIKPFMIQGLPVKVTPTEILTMTMGDRQARVLPLQELKERVEAIEGVLFKQFNSITDYHSLMFDLGVVPRRLRSSADRSKYYRLIEASLYGGISSAITRSLRDYLLPENSGVRKAFQDMEAALRENRLTLEAIRVTQSDRDLFKHLISEATAYVAADYMRHANERRLHLDDALTLRRDVFGSRKQLASEQYRHVDMARELAEISGGESDLETDYQAASDHLNLVQTAMRQQEKIGRYQEDLEELAFRLEEQNEVVAQSAEQQQENEARLEAAELEVDELKSQLADYQQALDVQQTRAIQFQQALQALDRARELCSLPAMTWEDAAPTLAIYKEREQEATERLLGFEQKLNIAEAASSRFEQAYGLVVKIAGQVSRSDAWQTARELIRDAASQRHQAERLQALRSQLNELEQRLREQQDAERLLQEFCQRMGQDYPPEELDVVQQELEARVETLSATVSEAGERRLALRQTLEQVTARIEQLTARALAWLAAQDALTALSEQSGEALTSSRQVTDTMQLLLERERETTVERDEVAGRKRCIEAQIERLSQPGGTDDARLTTLAERFGGVLLSEIYDDVTLDNAPYFSALYGPSHHAIVVPDLSRVREQLDGLEDCPDDLYLIEGDPQSFDDNVFGVEELEGAVLVKVADRQWRYSRFPAVPLFGRAARESRLENLSAERDVLAERYATLSFDVQKIQRQHQAFSRFIGAHLAVAFEPDPEAEMRTLNGRRGELERELSDHHGQNQQSRQHYDQAREGLQLLNRLIPRLGVLLDDTLQDRLETVQADWHDAQEAARYLSQHQKALDQLEPLVAVLQSDPEQHEQLRADYEQAQQTQRQVRQQAFALTEVVQRRTHFSYSDSAGMLSENTDLNDKLRQRLERAEAERSQARDALHAHQAQLTQFSQVQASLKSSYDAKQDMLKELMQELHDIGVQVDANAEARARERRDQLHMALSQNRGRRNQLEKQLTFCEAEMDALQKKLRKLERDYYQTREQVVSAKAGWCSVLRLVKENGVERRLHRRELAYMEAEDLRSMSDKALGALRLAVADNEHLRDVLRLSEDLKRPERKIQFFIAVYQHLRERIRQDIIRTDDPVEAIEQMEIELNRLTEELTAREQKLAISSKSVANIIRKTIQREQNRIRMLNQGLQAVSFGQVKSVRLNVSVREAHATLLDVLSEQQEQHQDLFSSQRLTFSEALAKLYQRLNPQIDLRQRTPQTVGEELLDYRNYLEIEVEVNRGADGWLRAESGALSTGEAIGTGMSILVIVVQSWEEESSRLRGKDISPCRLLFLDEAARLDAKSIATLFELCDRLQMQLIIAAPENISPEKGTTYKLVRKVFNNQEHVHVVGLLGFGTEQAAPPSTALTETDS</sequence>
<organism>
    <name type="scientific">Sodalis glossinidius (strain morsitans)</name>
    <dbReference type="NCBI Taxonomy" id="343509"/>
    <lineage>
        <taxon>Bacteria</taxon>
        <taxon>Pseudomonadati</taxon>
        <taxon>Pseudomonadota</taxon>
        <taxon>Gammaproteobacteria</taxon>
        <taxon>Enterobacterales</taxon>
        <taxon>Bruguierivoracaceae</taxon>
        <taxon>Sodalis</taxon>
    </lineage>
</organism>
<feature type="chain" id="PRO_1000069916" description="Chromosome partition protein MukB">
    <location>
        <begin position="1"/>
        <end position="1484"/>
    </location>
</feature>
<feature type="region of interest" description="Flexible hinge" evidence="1">
    <location>
        <begin position="666"/>
        <end position="783"/>
    </location>
</feature>
<feature type="coiled-coil region" evidence="1">
    <location>
        <begin position="338"/>
        <end position="415"/>
    </location>
</feature>
<feature type="coiled-coil region" evidence="1">
    <location>
        <begin position="496"/>
        <end position="604"/>
    </location>
</feature>
<feature type="coiled-coil region" evidence="1">
    <location>
        <begin position="781"/>
        <end position="805"/>
    </location>
</feature>
<feature type="coiled-coil region" evidence="1">
    <location>
        <begin position="835"/>
        <end position="868"/>
    </location>
</feature>
<feature type="coiled-coil region" evidence="1">
    <location>
        <begin position="903"/>
        <end position="1115"/>
    </location>
</feature>
<feature type="coiled-coil region" evidence="1">
    <location>
        <begin position="1206"/>
        <end position="1265"/>
    </location>
</feature>
<feature type="binding site" evidence="1">
    <location>
        <begin position="34"/>
        <end position="41"/>
    </location>
    <ligand>
        <name>ATP</name>
        <dbReference type="ChEBI" id="CHEBI:30616"/>
    </ligand>
</feature>
<protein>
    <recommendedName>
        <fullName evidence="1">Chromosome partition protein MukB</fullName>
    </recommendedName>
    <alternativeName>
        <fullName evidence="1">Structural maintenance of chromosome-related protein</fullName>
    </alternativeName>
</protein>